<gene>
    <name evidence="1" type="primary">lpd-7</name>
    <name type="ORF">R13A5.12</name>
</gene>
<feature type="chain" id="PRO_0000370466" description="Pescadillo homolog">
    <location>
        <begin position="1"/>
        <end position="531"/>
    </location>
</feature>
<feature type="domain" description="BRCT" evidence="1">
    <location>
        <begin position="309"/>
        <end position="398"/>
    </location>
</feature>
<evidence type="ECO:0000255" key="1">
    <source>
        <dbReference type="HAMAP-Rule" id="MF_03028"/>
    </source>
</evidence>
<reference key="1">
    <citation type="journal article" date="1998" name="Science">
        <title>Genome sequence of the nematode C. elegans: a platform for investigating biology.</title>
        <authorList>
            <consortium name="The C. elegans sequencing consortium"/>
        </authorList>
    </citation>
    <scope>NUCLEOTIDE SEQUENCE [LARGE SCALE GENOMIC DNA]</scope>
    <source>
        <strain>Bristol N2</strain>
    </source>
</reference>
<accession>Q95Y89</accession>
<organism>
    <name type="scientific">Caenorhabditis elegans</name>
    <dbReference type="NCBI Taxonomy" id="6239"/>
    <lineage>
        <taxon>Eukaryota</taxon>
        <taxon>Metazoa</taxon>
        <taxon>Ecdysozoa</taxon>
        <taxon>Nematoda</taxon>
        <taxon>Chromadorea</taxon>
        <taxon>Rhabditida</taxon>
        <taxon>Rhabditina</taxon>
        <taxon>Rhabditomorpha</taxon>
        <taxon>Rhabditoidea</taxon>
        <taxon>Rhabditidae</taxon>
        <taxon>Peloderinae</taxon>
        <taxon>Caenorhabditis</taxon>
    </lineage>
</organism>
<dbReference type="EMBL" id="FO080424">
    <property type="protein sequence ID" value="CCD63607.1"/>
    <property type="molecule type" value="Genomic_DNA"/>
</dbReference>
<dbReference type="RefSeq" id="NP_498661.1">
    <property type="nucleotide sequence ID" value="NM_066260.7"/>
</dbReference>
<dbReference type="SMR" id="Q95Y89"/>
<dbReference type="BioGRID" id="41280">
    <property type="interactions" value="8"/>
</dbReference>
<dbReference type="DIP" id="DIP-24882N"/>
<dbReference type="FunCoup" id="Q95Y89">
    <property type="interactions" value="3046"/>
</dbReference>
<dbReference type="STRING" id="6239.R13A5.12.1"/>
<dbReference type="PaxDb" id="6239-R13A5.12"/>
<dbReference type="PeptideAtlas" id="Q95Y89"/>
<dbReference type="EnsemblMetazoa" id="R13A5.12.1">
    <property type="protein sequence ID" value="R13A5.12.1"/>
    <property type="gene ID" value="WBGene00003063"/>
</dbReference>
<dbReference type="GeneID" id="176072"/>
<dbReference type="KEGG" id="cel:CELE_R13A5.12"/>
<dbReference type="UCSC" id="R13A5.12.1">
    <property type="organism name" value="c. elegans"/>
</dbReference>
<dbReference type="AGR" id="WB:WBGene00003063"/>
<dbReference type="CTD" id="176072"/>
<dbReference type="WormBase" id="R13A5.12">
    <property type="protein sequence ID" value="CE21123"/>
    <property type="gene ID" value="WBGene00003063"/>
    <property type="gene designation" value="lpd-7"/>
</dbReference>
<dbReference type="eggNOG" id="KOG2481">
    <property type="taxonomic scope" value="Eukaryota"/>
</dbReference>
<dbReference type="GeneTree" id="ENSGT00390000002626"/>
<dbReference type="HOGENOM" id="CLU_019619_0_0_1"/>
<dbReference type="InParanoid" id="Q95Y89"/>
<dbReference type="OMA" id="QKVTWIV"/>
<dbReference type="OrthoDB" id="10264910at2759"/>
<dbReference type="PhylomeDB" id="Q95Y89"/>
<dbReference type="Reactome" id="R-CEL-6791226">
    <property type="pathway name" value="Major pathway of rRNA processing in the nucleolus and cytosol"/>
</dbReference>
<dbReference type="PRO" id="PR:Q95Y89"/>
<dbReference type="Proteomes" id="UP000001940">
    <property type="component" value="Chromosome III"/>
</dbReference>
<dbReference type="Bgee" id="WBGene00003063">
    <property type="expression patterns" value="Expressed in germ line (C elegans) and 4 other cell types or tissues"/>
</dbReference>
<dbReference type="GO" id="GO:0005654">
    <property type="term" value="C:nucleoplasm"/>
    <property type="evidence" value="ECO:0007669"/>
    <property type="project" value="UniProtKB-SubCell"/>
</dbReference>
<dbReference type="GO" id="GO:0070545">
    <property type="term" value="C:PeBoW complex"/>
    <property type="evidence" value="ECO:0000318"/>
    <property type="project" value="GO_Central"/>
</dbReference>
<dbReference type="GO" id="GO:0030687">
    <property type="term" value="C:preribosome, large subunit precursor"/>
    <property type="evidence" value="ECO:0007669"/>
    <property type="project" value="UniProtKB-UniRule"/>
</dbReference>
<dbReference type="GO" id="GO:0043021">
    <property type="term" value="F:ribonucleoprotein complex binding"/>
    <property type="evidence" value="ECO:0007669"/>
    <property type="project" value="UniProtKB-UniRule"/>
</dbReference>
<dbReference type="GO" id="GO:0003723">
    <property type="term" value="F:RNA binding"/>
    <property type="evidence" value="ECO:0000318"/>
    <property type="project" value="GO_Central"/>
</dbReference>
<dbReference type="GO" id="GO:0019915">
    <property type="term" value="P:lipid storage"/>
    <property type="evidence" value="ECO:0000315"/>
    <property type="project" value="WormBase"/>
</dbReference>
<dbReference type="GO" id="GO:0000466">
    <property type="term" value="P:maturation of 5.8S rRNA from tricistronic rRNA transcript (SSU-rRNA, 5.8S rRNA, LSU-rRNA)"/>
    <property type="evidence" value="ECO:0007669"/>
    <property type="project" value="UniProtKB-UniRule"/>
</dbReference>
<dbReference type="GO" id="GO:0000463">
    <property type="term" value="P:maturation of LSU-rRNA from tricistronic rRNA transcript (SSU-rRNA, 5.8S rRNA, LSU-rRNA)"/>
    <property type="evidence" value="ECO:0000318"/>
    <property type="project" value="GO_Central"/>
</dbReference>
<dbReference type="CDD" id="cd17709">
    <property type="entry name" value="BRCT_pescadillo_like"/>
    <property type="match status" value="1"/>
</dbReference>
<dbReference type="Gene3D" id="3.40.50.10190">
    <property type="entry name" value="BRCT domain"/>
    <property type="match status" value="1"/>
</dbReference>
<dbReference type="HAMAP" id="MF_03028">
    <property type="entry name" value="Pescadillo"/>
    <property type="match status" value="1"/>
</dbReference>
<dbReference type="InterPro" id="IPR001357">
    <property type="entry name" value="BRCT_dom"/>
</dbReference>
<dbReference type="InterPro" id="IPR036420">
    <property type="entry name" value="BRCT_dom_sf"/>
</dbReference>
<dbReference type="InterPro" id="IPR010613">
    <property type="entry name" value="PES"/>
</dbReference>
<dbReference type="PANTHER" id="PTHR12221">
    <property type="entry name" value="PESCADILLO - RELATED"/>
    <property type="match status" value="1"/>
</dbReference>
<dbReference type="PANTHER" id="PTHR12221:SF6">
    <property type="entry name" value="PESCADILLO HOMOLOG"/>
    <property type="match status" value="1"/>
</dbReference>
<dbReference type="Pfam" id="PF16589">
    <property type="entry name" value="BRCT_2"/>
    <property type="match status" value="1"/>
</dbReference>
<dbReference type="Pfam" id="PF06732">
    <property type="entry name" value="Pescadillo_N"/>
    <property type="match status" value="1"/>
</dbReference>
<dbReference type="SMART" id="SM00292">
    <property type="entry name" value="BRCT"/>
    <property type="match status" value="1"/>
</dbReference>
<dbReference type="SUPFAM" id="SSF52113">
    <property type="entry name" value="BRCT domain"/>
    <property type="match status" value="1"/>
</dbReference>
<dbReference type="PROSITE" id="PS50172">
    <property type="entry name" value="BRCT"/>
    <property type="match status" value="1"/>
</dbReference>
<protein>
    <recommendedName>
        <fullName evidence="1">Pescadillo homolog</fullName>
    </recommendedName>
    <alternativeName>
        <fullName evidence="1">Lipid depleted protein 7</fullName>
    </alternativeName>
</protein>
<comment type="function">
    <text evidence="1">Required for maturation of ribosomal RNAs and formation of the large ribosomal subunit.</text>
</comment>
<comment type="subcellular location">
    <subcellularLocation>
        <location evidence="1">Nucleus</location>
        <location evidence="1">Nucleolus</location>
    </subcellularLocation>
    <subcellularLocation>
        <location evidence="1">Nucleus</location>
        <location evidence="1">Nucleoplasm</location>
    </subcellularLocation>
</comment>
<comment type="similarity">
    <text evidence="1">Belongs to the pescadillo family.</text>
</comment>
<keyword id="KW-0539">Nucleus</keyword>
<keyword id="KW-1185">Reference proteome</keyword>
<keyword id="KW-0690">Ribosome biogenesis</keyword>
<keyword id="KW-0698">rRNA processing</keyword>
<sequence>MKDRFKQKYTAGAAVAYMSRKQALKKLQLTLKDFRRLCIIKGIYPHEPAHKKQANKGSTANKVFYYRKDINFLAHEPIINKFRDYKVFLRKLNHLKAKKEEDKLKKLYENKPVYSLDTIVKERFPTFGSALRDMDDALSLCFTFAMLPHTRVLKEGMIDSCRKLTAEFMHYVIESQSLRNTFISIKGIYYQAEVHGEKITWVVPHERGLPHVTDVDFTVLVTFVEFYIAMLGFVNFKLYQDIGLFYPPQIGQVVKTDEMETEEYKEKVYSLAKPLAKRKDVEQAEDDEPLDLLGEDSDALAQKVREAKSIKTMFKGCVFYLNRECPKEALTFIIRNGGGIVGWEGGPTDLKADSKNISHHVVDRPMDKLEVNRLYVQPQWVFDCLNARRKLPTERYMPGVALPPHFSPFTSEKAGDYIPFERLEELRSMGKDVSDLEAAIPKTMDELPMRRKEVKPEKPKGIHIAVGQMHKKSKEKFHETVEKGQELKMRELMISKKHQRVYHSMKTTFKRNRNDALKLKKKAKLAKATEA</sequence>
<proteinExistence type="inferred from homology"/>
<name>PESC_CAEEL</name>